<dbReference type="EC" id="2.5.1.-" evidence="1"/>
<dbReference type="EMBL" id="BX571856">
    <property type="protein sequence ID" value="CAG41399.1"/>
    <property type="molecule type" value="Genomic_DNA"/>
</dbReference>
<dbReference type="RefSeq" id="WP_000920241.1">
    <property type="nucleotide sequence ID" value="NC_002952.2"/>
</dbReference>
<dbReference type="SMR" id="Q6GEA2"/>
<dbReference type="KEGG" id="sar:SAR2419"/>
<dbReference type="HOGENOM" id="CLU_121356_0_0_9"/>
<dbReference type="Proteomes" id="UP000000596">
    <property type="component" value="Chromosome"/>
</dbReference>
<dbReference type="GO" id="GO:0005737">
    <property type="term" value="C:cytoplasm"/>
    <property type="evidence" value="ECO:0007669"/>
    <property type="project" value="UniProtKB-SubCell"/>
</dbReference>
<dbReference type="GO" id="GO:0000287">
    <property type="term" value="F:magnesium ion binding"/>
    <property type="evidence" value="ECO:0007669"/>
    <property type="project" value="UniProtKB-UniRule"/>
</dbReference>
<dbReference type="GO" id="GO:0016765">
    <property type="term" value="F:transferase activity, transferring alkyl or aryl (other than methyl) groups"/>
    <property type="evidence" value="ECO:0007669"/>
    <property type="project" value="UniProtKB-UniRule"/>
</dbReference>
<dbReference type="GO" id="GO:0046677">
    <property type="term" value="P:response to antibiotic"/>
    <property type="evidence" value="ECO:0007669"/>
    <property type="project" value="UniProtKB-UniRule"/>
</dbReference>
<dbReference type="Gene3D" id="3.10.180.10">
    <property type="entry name" value="2,3-Dihydroxybiphenyl 1,2-Dioxygenase, domain 1"/>
    <property type="match status" value="1"/>
</dbReference>
<dbReference type="HAMAP" id="MF_01512">
    <property type="entry name" value="FosB"/>
    <property type="match status" value="1"/>
</dbReference>
<dbReference type="InterPro" id="IPR051332">
    <property type="entry name" value="Fosfomycin_Res_Enzymes"/>
</dbReference>
<dbReference type="InterPro" id="IPR029068">
    <property type="entry name" value="Glyas_Bleomycin-R_OHBP_Dase"/>
</dbReference>
<dbReference type="InterPro" id="IPR004360">
    <property type="entry name" value="Glyas_Fos-R_dOase_dom"/>
</dbReference>
<dbReference type="InterPro" id="IPR022858">
    <property type="entry name" value="Metallothiol_Trafse_FosB"/>
</dbReference>
<dbReference type="InterPro" id="IPR037523">
    <property type="entry name" value="VOC"/>
</dbReference>
<dbReference type="NCBIfam" id="NF000493">
    <property type="entry name" value="Fos_BSH"/>
    <property type="match status" value="1"/>
</dbReference>
<dbReference type="NCBIfam" id="NF003152">
    <property type="entry name" value="PRK04101.1"/>
    <property type="match status" value="1"/>
</dbReference>
<dbReference type="PANTHER" id="PTHR36113:SF6">
    <property type="entry name" value="FOSFOMYCIN RESISTANCE PROTEIN FOSX"/>
    <property type="match status" value="1"/>
</dbReference>
<dbReference type="PANTHER" id="PTHR36113">
    <property type="entry name" value="LYASE, PUTATIVE-RELATED-RELATED"/>
    <property type="match status" value="1"/>
</dbReference>
<dbReference type="Pfam" id="PF00903">
    <property type="entry name" value="Glyoxalase"/>
    <property type="match status" value="1"/>
</dbReference>
<dbReference type="SUPFAM" id="SSF54593">
    <property type="entry name" value="Glyoxalase/Bleomycin resistance protein/Dihydroxybiphenyl dioxygenase"/>
    <property type="match status" value="1"/>
</dbReference>
<dbReference type="PROSITE" id="PS51819">
    <property type="entry name" value="VOC"/>
    <property type="match status" value="1"/>
</dbReference>
<keyword id="KW-0046">Antibiotic resistance</keyword>
<keyword id="KW-0963">Cytoplasm</keyword>
<keyword id="KW-0460">Magnesium</keyword>
<keyword id="KW-0479">Metal-binding</keyword>
<keyword id="KW-0808">Transferase</keyword>
<reference key="1">
    <citation type="journal article" date="2004" name="Proc. Natl. Acad. Sci. U.S.A.">
        <title>Complete genomes of two clinical Staphylococcus aureus strains: evidence for the rapid evolution of virulence and drug resistance.</title>
        <authorList>
            <person name="Holden M.T.G."/>
            <person name="Feil E.J."/>
            <person name="Lindsay J.A."/>
            <person name="Peacock S.J."/>
            <person name="Day N.P.J."/>
            <person name="Enright M.C."/>
            <person name="Foster T.J."/>
            <person name="Moore C.E."/>
            <person name="Hurst L."/>
            <person name="Atkin R."/>
            <person name="Barron A."/>
            <person name="Bason N."/>
            <person name="Bentley S.D."/>
            <person name="Chillingworth C."/>
            <person name="Chillingworth T."/>
            <person name="Churcher C."/>
            <person name="Clark L."/>
            <person name="Corton C."/>
            <person name="Cronin A."/>
            <person name="Doggett J."/>
            <person name="Dowd L."/>
            <person name="Feltwell T."/>
            <person name="Hance Z."/>
            <person name="Harris B."/>
            <person name="Hauser H."/>
            <person name="Holroyd S."/>
            <person name="Jagels K."/>
            <person name="James K.D."/>
            <person name="Lennard N."/>
            <person name="Line A."/>
            <person name="Mayes R."/>
            <person name="Moule S."/>
            <person name="Mungall K."/>
            <person name="Ormond D."/>
            <person name="Quail M.A."/>
            <person name="Rabbinowitsch E."/>
            <person name="Rutherford K.M."/>
            <person name="Sanders M."/>
            <person name="Sharp S."/>
            <person name="Simmonds M."/>
            <person name="Stevens K."/>
            <person name="Whitehead S."/>
            <person name="Barrell B.G."/>
            <person name="Spratt B.G."/>
            <person name="Parkhill J."/>
        </authorList>
    </citation>
    <scope>NUCLEOTIDE SEQUENCE [LARGE SCALE GENOMIC DNA]</scope>
    <source>
        <strain>MRSA252</strain>
    </source>
</reference>
<accession>Q6GEA2</accession>
<sequence>MLKSINHICFSVRNLNDSIHFYRDILLGKLLLTGKKTAYFKLAGLWIALNEEKDIPRNEIHFSYTHIAFTIDDSEFKYWHQRLKDNNVNILEGRVRDIRDRQSIYFTDPDGHKLELHTGTLENRLNYYKEAKPHMTFYK</sequence>
<feature type="chain" id="PRO_0000164037" description="Metallothiol transferase FosB">
    <location>
        <begin position="1"/>
        <end position="139"/>
    </location>
</feature>
<feature type="domain" description="VOC" evidence="2">
    <location>
        <begin position="4"/>
        <end position="119"/>
    </location>
</feature>
<feature type="active site" description="Proton donor/acceptor" evidence="2">
    <location>
        <position position="115"/>
    </location>
</feature>
<feature type="binding site" evidence="1">
    <location>
        <position position="7"/>
    </location>
    <ligand>
        <name>Mg(2+)</name>
        <dbReference type="ChEBI" id="CHEBI:18420"/>
    </ligand>
</feature>
<feature type="binding site" evidence="1">
    <location>
        <position position="66"/>
    </location>
    <ligand>
        <name>Mg(2+)</name>
        <dbReference type="ChEBI" id="CHEBI:18420"/>
    </ligand>
</feature>
<feature type="binding site" evidence="1">
    <location>
        <position position="115"/>
    </location>
    <ligand>
        <name>Mg(2+)</name>
        <dbReference type="ChEBI" id="CHEBI:18420"/>
    </ligand>
</feature>
<protein>
    <recommendedName>
        <fullName evidence="1">Metallothiol transferase FosB</fullName>
        <ecNumber evidence="1">2.5.1.-</ecNumber>
    </recommendedName>
    <alternativeName>
        <fullName evidence="1">Fosfomycin resistance protein</fullName>
    </alternativeName>
</protein>
<name>FOSB_STAAR</name>
<comment type="function">
    <text evidence="1">Metallothiol transferase which confers resistance to fosfomycin by catalyzing the addition of a thiol cofactor to fosfomycin. L-cysteine is probably the physiological thiol donor.</text>
</comment>
<comment type="cofactor">
    <cofactor evidence="1">
        <name>Mg(2+)</name>
        <dbReference type="ChEBI" id="CHEBI:18420"/>
    </cofactor>
</comment>
<comment type="subunit">
    <text evidence="1">Homodimer.</text>
</comment>
<comment type="subcellular location">
    <subcellularLocation>
        <location evidence="1">Cytoplasm</location>
    </subcellularLocation>
</comment>
<comment type="similarity">
    <text evidence="1">Belongs to the fosfomycin resistance protein family. FosB subfamily.</text>
</comment>
<proteinExistence type="inferred from homology"/>
<organism>
    <name type="scientific">Staphylococcus aureus (strain MRSA252)</name>
    <dbReference type="NCBI Taxonomy" id="282458"/>
    <lineage>
        <taxon>Bacteria</taxon>
        <taxon>Bacillati</taxon>
        <taxon>Bacillota</taxon>
        <taxon>Bacilli</taxon>
        <taxon>Bacillales</taxon>
        <taxon>Staphylococcaceae</taxon>
        <taxon>Staphylococcus</taxon>
    </lineage>
</organism>
<evidence type="ECO:0000255" key="1">
    <source>
        <dbReference type="HAMAP-Rule" id="MF_01512"/>
    </source>
</evidence>
<evidence type="ECO:0000255" key="2">
    <source>
        <dbReference type="PROSITE-ProRule" id="PRU01163"/>
    </source>
</evidence>
<gene>
    <name evidence="1" type="primary">fosB</name>
    <name type="ordered locus">SAR2419</name>
</gene>